<gene>
    <name evidence="1" type="primary">nuoD</name>
    <name type="ordered locus">Mkms_1601</name>
</gene>
<keyword id="KW-1003">Cell membrane</keyword>
<keyword id="KW-0472">Membrane</keyword>
<keyword id="KW-0520">NAD</keyword>
<keyword id="KW-0874">Quinone</keyword>
<keyword id="KW-1278">Translocase</keyword>
<keyword id="KW-0813">Transport</keyword>
<feature type="chain" id="PRO_0000357860" description="NADH-quinone oxidoreductase subunit D">
    <location>
        <begin position="1"/>
        <end position="446"/>
    </location>
</feature>
<reference key="1">
    <citation type="submission" date="2006-12" db="EMBL/GenBank/DDBJ databases">
        <title>Complete sequence of chromosome of Mycobacterium sp. KMS.</title>
        <authorList>
            <consortium name="US DOE Joint Genome Institute"/>
            <person name="Copeland A."/>
            <person name="Lucas S."/>
            <person name="Lapidus A."/>
            <person name="Barry K."/>
            <person name="Detter J.C."/>
            <person name="Glavina del Rio T."/>
            <person name="Hammon N."/>
            <person name="Israni S."/>
            <person name="Dalin E."/>
            <person name="Tice H."/>
            <person name="Pitluck S."/>
            <person name="Kiss H."/>
            <person name="Brettin T."/>
            <person name="Bruce D."/>
            <person name="Han C."/>
            <person name="Tapia R."/>
            <person name="Gilna P."/>
            <person name="Schmutz J."/>
            <person name="Larimer F."/>
            <person name="Land M."/>
            <person name="Hauser L."/>
            <person name="Kyrpides N."/>
            <person name="Mikhailova N."/>
            <person name="Miller C.D."/>
            <person name="Richardson P."/>
        </authorList>
    </citation>
    <scope>NUCLEOTIDE SEQUENCE [LARGE SCALE GENOMIC DNA]</scope>
    <source>
        <strain>KMS</strain>
    </source>
</reference>
<organism>
    <name type="scientific">Mycobacterium sp. (strain KMS)</name>
    <dbReference type="NCBI Taxonomy" id="189918"/>
    <lineage>
        <taxon>Bacteria</taxon>
        <taxon>Bacillati</taxon>
        <taxon>Actinomycetota</taxon>
        <taxon>Actinomycetes</taxon>
        <taxon>Mycobacteriales</taxon>
        <taxon>Mycobacteriaceae</taxon>
        <taxon>Mycobacterium</taxon>
    </lineage>
</organism>
<sequence>MTTPPGPPNAGGDARTGTDTVIVVGGEDWEQVVAAAEQAQAGERIVVNMGPQHPSTHGVLRLILEIEGETITEARCGIGYLHTGIEKNLEYRNWTQGVTFVTRMDYLSPFFNETAYCLGVEKLLGVTDAIPERVNVIRVMLMELNRISSHLVALATGGMELGAMSAMFYGFREREEILSVFEMITGLRMNHAYIRPGGLAADLPDGAVPRIRELLALLPGRLRDLENLLNENYIWKARTQGIGYLDLAGCMALGITGPVLRSTGLPHDLRRAQPYCGYEDYEFDVITDDGCDAYGRYLIRVKEMRESLKIVEQCVDRLKPGPVMIADKKLAWPADLELGPDGLGNSPAHIARIMGQSMEGLIHHFKLVTEGIRVPAGQVYTAVESPRGELGVHMVSDGGTRPYRVHYRDPSFTNLQAVAAMCEGGMVADAISAVASIDPVMGGVDR</sequence>
<protein>
    <recommendedName>
        <fullName evidence="1">NADH-quinone oxidoreductase subunit D</fullName>
        <ecNumber evidence="1">7.1.1.-</ecNumber>
    </recommendedName>
    <alternativeName>
        <fullName evidence="1">NADH dehydrogenase I subunit D</fullName>
    </alternativeName>
    <alternativeName>
        <fullName evidence="1">NDH-1 subunit D</fullName>
    </alternativeName>
</protein>
<name>NUOD_MYCSK</name>
<proteinExistence type="inferred from homology"/>
<evidence type="ECO:0000255" key="1">
    <source>
        <dbReference type="HAMAP-Rule" id="MF_01358"/>
    </source>
</evidence>
<dbReference type="EC" id="7.1.1.-" evidence="1"/>
<dbReference type="EMBL" id="CP000518">
    <property type="protein sequence ID" value="ABL90809.1"/>
    <property type="molecule type" value="Genomic_DNA"/>
</dbReference>
<dbReference type="SMR" id="A1UDA1"/>
<dbReference type="STRING" id="189918.Mkms_1601"/>
<dbReference type="KEGG" id="mkm:Mkms_1601"/>
<dbReference type="HOGENOM" id="CLU_015134_1_2_11"/>
<dbReference type="OrthoDB" id="9801496at2"/>
<dbReference type="GO" id="GO:0005886">
    <property type="term" value="C:plasma membrane"/>
    <property type="evidence" value="ECO:0007669"/>
    <property type="project" value="UniProtKB-SubCell"/>
</dbReference>
<dbReference type="GO" id="GO:0051287">
    <property type="term" value="F:NAD binding"/>
    <property type="evidence" value="ECO:0007669"/>
    <property type="project" value="InterPro"/>
</dbReference>
<dbReference type="GO" id="GO:0050136">
    <property type="term" value="F:NADH:ubiquinone reductase (non-electrogenic) activity"/>
    <property type="evidence" value="ECO:0007669"/>
    <property type="project" value="UniProtKB-UniRule"/>
</dbReference>
<dbReference type="GO" id="GO:0048038">
    <property type="term" value="F:quinone binding"/>
    <property type="evidence" value="ECO:0007669"/>
    <property type="project" value="UniProtKB-KW"/>
</dbReference>
<dbReference type="Gene3D" id="1.10.645.10">
    <property type="entry name" value="Cytochrome-c3 Hydrogenase, chain B"/>
    <property type="match status" value="1"/>
</dbReference>
<dbReference type="HAMAP" id="MF_01358">
    <property type="entry name" value="NDH1_NuoD"/>
    <property type="match status" value="1"/>
</dbReference>
<dbReference type="InterPro" id="IPR001135">
    <property type="entry name" value="NADH_Q_OxRdtase_suD"/>
</dbReference>
<dbReference type="InterPro" id="IPR014029">
    <property type="entry name" value="NADH_UbQ_OxRdtase_49kDa_CS"/>
</dbReference>
<dbReference type="InterPro" id="IPR022885">
    <property type="entry name" value="NDH1_su_D/H"/>
</dbReference>
<dbReference type="InterPro" id="IPR029014">
    <property type="entry name" value="NiFe-Hase_large"/>
</dbReference>
<dbReference type="NCBIfam" id="TIGR01962">
    <property type="entry name" value="NuoD"/>
    <property type="match status" value="1"/>
</dbReference>
<dbReference type="NCBIfam" id="NF004739">
    <property type="entry name" value="PRK06075.1"/>
    <property type="match status" value="1"/>
</dbReference>
<dbReference type="PANTHER" id="PTHR11993:SF10">
    <property type="entry name" value="NADH DEHYDROGENASE [UBIQUINONE] IRON-SULFUR PROTEIN 2, MITOCHONDRIAL"/>
    <property type="match status" value="1"/>
</dbReference>
<dbReference type="PANTHER" id="PTHR11993">
    <property type="entry name" value="NADH-UBIQUINONE OXIDOREDUCTASE 49 KDA SUBUNIT"/>
    <property type="match status" value="1"/>
</dbReference>
<dbReference type="Pfam" id="PF00346">
    <property type="entry name" value="Complex1_49kDa"/>
    <property type="match status" value="1"/>
</dbReference>
<dbReference type="SUPFAM" id="SSF56762">
    <property type="entry name" value="HydB/Nqo4-like"/>
    <property type="match status" value="1"/>
</dbReference>
<dbReference type="PROSITE" id="PS00535">
    <property type="entry name" value="COMPLEX1_49K"/>
    <property type="match status" value="1"/>
</dbReference>
<comment type="function">
    <text evidence="1">NDH-1 shuttles electrons from NADH, via FMN and iron-sulfur (Fe-S) centers, to quinones in the respiratory chain. The immediate electron acceptor for the enzyme in this species is believed to be a menaquinone. Couples the redox reaction to proton translocation (for every two electrons transferred, four hydrogen ions are translocated across the cytoplasmic membrane), and thus conserves the redox energy in a proton gradient.</text>
</comment>
<comment type="catalytic activity">
    <reaction evidence="1">
        <text>a quinone + NADH + 5 H(+)(in) = a quinol + NAD(+) + 4 H(+)(out)</text>
        <dbReference type="Rhea" id="RHEA:57888"/>
        <dbReference type="ChEBI" id="CHEBI:15378"/>
        <dbReference type="ChEBI" id="CHEBI:24646"/>
        <dbReference type="ChEBI" id="CHEBI:57540"/>
        <dbReference type="ChEBI" id="CHEBI:57945"/>
        <dbReference type="ChEBI" id="CHEBI:132124"/>
    </reaction>
</comment>
<comment type="subunit">
    <text evidence="1">NDH-1 is composed of 14 different subunits. Subunits NuoB, C, D, E, F, and G constitute the peripheral sector of the complex.</text>
</comment>
<comment type="subcellular location">
    <subcellularLocation>
        <location evidence="1">Cell membrane</location>
        <topology evidence="1">Peripheral membrane protein</topology>
        <orientation evidence="1">Cytoplasmic side</orientation>
    </subcellularLocation>
</comment>
<comment type="similarity">
    <text evidence="1">Belongs to the complex I 49 kDa subunit family.</text>
</comment>
<accession>A1UDA1</accession>